<sequence>MYYLCIFLWVTSVACQTSKEIYQLLSKSHTNQNLVVSPVSIETILSMVFMGAEGSTAKELQSALGLPSEDKEAVAARYGALLNDLQGQEEGPILKLANRIYVNDQYSLNQNYNLAVREPFKSEAESISLTNGPVAAERINQWVLDQTSGKIKGMIDPGSMTSDVKALLVNAIYFKGQWESKFDPAKTRASTFQVTANKSVPVQMMAQMGTFRANYFRDLDAQVIELPYLNSNLSMTIFLPREVEGLSALEEKIVGFARPLVAKEVYLKLPKFKIEFRDELKETLEKLGIRELFTDKSDLSGLFADKSGGKVSQVSHKAFLEVNEEGAEAAGATSVAVTNRAGFSTFLMADHPFAFVIRDANTIYFQGRVVSP</sequence>
<feature type="signal peptide" evidence="1">
    <location>
        <begin position="1"/>
        <end position="15"/>
    </location>
</feature>
<feature type="chain" id="PRO_0000436914" description="Serine protease inhibitor 42Dd" evidence="1">
    <location>
        <begin position="16"/>
        <end position="372"/>
    </location>
</feature>
<feature type="glycosylation site" description="N-linked (GlcNAc...) asparagine" evidence="2">
    <location>
        <position position="197"/>
    </location>
</feature>
<feature type="glycosylation site" description="N-linked (GlcNAc...) asparagine" evidence="2">
    <location>
        <position position="232"/>
    </location>
</feature>
<feature type="sequence conflict" description="In Ref. 1; CAB63096." evidence="6" ref="1">
    <original>S</original>
    <variation>C</variation>
    <location>
        <position position="26"/>
    </location>
</feature>
<comment type="function">
    <text evidence="4">Serine protease inhibitor with activity toward trypsin. Involved in innate immunity to fungal infection by negatively regulating the Toll signaling pathway and suppressing the expression of the antifungal peptide drosomycin. Acts upstream of SPE and grass, and downstream of the fungal cell wall pattern recognition receptor GNBP3. May function specifically in the GNBP3-dependent beta-1,3-glucan branch of the Toll pathway.</text>
</comment>
<comment type="subcellular location">
    <subcellularLocation>
        <location evidence="6">Secreted</location>
    </subcellularLocation>
</comment>
<comment type="tissue specificity">
    <text evidence="3">Expressed in the ovary.</text>
</comment>
<comment type="induction">
    <text evidence="4">Up-regulated by the Gram-positive bacterium M.luteus, the fungus B.bassiana and the yeast C.albicans.</text>
</comment>
<comment type="disruption phenotype">
    <text evidence="4">RNAi-mediated knockdown results in the constitutive expression of Drs.</text>
</comment>
<comment type="similarity">
    <text evidence="6">Belongs to the serpin family.</text>
</comment>
<name>SP42D_DROME</name>
<keyword id="KW-0325">Glycoprotein</keyword>
<keyword id="KW-0391">Immunity</keyword>
<keyword id="KW-0646">Protease inhibitor</keyword>
<keyword id="KW-1185">Reference proteome</keyword>
<keyword id="KW-0964">Secreted</keyword>
<keyword id="KW-0722">Serine protease inhibitor</keyword>
<keyword id="KW-0732">Signal</keyword>
<protein>
    <recommendedName>
        <fullName evidence="5">Serine protease inhibitor 42Dd</fullName>
        <shortName evidence="9">Serpin 42Dd</shortName>
    </recommendedName>
</protein>
<accession>Q7YTY6</accession>
<accession>Q7KA42</accession>
<evidence type="ECO:0000255" key="1"/>
<evidence type="ECO:0000255" key="2">
    <source>
        <dbReference type="PROSITE-ProRule" id="PRU00498"/>
    </source>
</evidence>
<evidence type="ECO:0000269" key="3">
    <source>
    </source>
</evidence>
<evidence type="ECO:0000269" key="4">
    <source>
    </source>
</evidence>
<evidence type="ECO:0000303" key="5">
    <source>
    </source>
</evidence>
<evidence type="ECO:0000305" key="6"/>
<evidence type="ECO:0000312" key="7">
    <source>
        <dbReference type="EMBL" id="AAQ22579.1"/>
    </source>
</evidence>
<evidence type="ECO:0000312" key="8">
    <source>
        <dbReference type="EMBL" id="CAB63096.1"/>
    </source>
</evidence>
<evidence type="ECO:0000312" key="9">
    <source>
        <dbReference type="FlyBase" id="FBgn0028988"/>
    </source>
</evidence>
<evidence type="ECO:0000312" key="10">
    <source>
        <dbReference type="Proteomes" id="UP000000803"/>
    </source>
</evidence>
<organism evidence="10">
    <name type="scientific">Drosophila melanogaster</name>
    <name type="common">Fruit fly</name>
    <dbReference type="NCBI Taxonomy" id="7227"/>
    <lineage>
        <taxon>Eukaryota</taxon>
        <taxon>Metazoa</taxon>
        <taxon>Ecdysozoa</taxon>
        <taxon>Arthropoda</taxon>
        <taxon>Hexapoda</taxon>
        <taxon>Insecta</taxon>
        <taxon>Pterygota</taxon>
        <taxon>Neoptera</taxon>
        <taxon>Endopterygota</taxon>
        <taxon>Diptera</taxon>
        <taxon>Brachycera</taxon>
        <taxon>Muscomorpha</taxon>
        <taxon>Ephydroidea</taxon>
        <taxon>Drosophilidae</taxon>
        <taxon>Drosophila</taxon>
        <taxon>Sophophora</taxon>
    </lineage>
</organism>
<reference evidence="8" key="1">
    <citation type="journal article" date="2000" name="FEBS Lett.">
        <title>A novel Drosophila serpin that inhibits serine proteases.</title>
        <authorList>
            <person name="Han J.H."/>
            <person name="Zhang H."/>
            <person name="Min G.S."/>
            <person name="Hashimoto C."/>
        </authorList>
    </citation>
    <scope>NUCLEOTIDE SEQUENCE [MRNA]</scope>
    <scope>TISSUE SPECIFICITY</scope>
</reference>
<reference evidence="10" key="2">
    <citation type="journal article" date="2000" name="Science">
        <title>The genome sequence of Drosophila melanogaster.</title>
        <authorList>
            <person name="Adams M.D."/>
            <person name="Celniker S.E."/>
            <person name="Holt R.A."/>
            <person name="Evans C.A."/>
            <person name="Gocayne J.D."/>
            <person name="Amanatides P.G."/>
            <person name="Scherer S.E."/>
            <person name="Li P.W."/>
            <person name="Hoskins R.A."/>
            <person name="Galle R.F."/>
            <person name="George R.A."/>
            <person name="Lewis S.E."/>
            <person name="Richards S."/>
            <person name="Ashburner M."/>
            <person name="Henderson S.N."/>
            <person name="Sutton G.G."/>
            <person name="Wortman J.R."/>
            <person name="Yandell M.D."/>
            <person name="Zhang Q."/>
            <person name="Chen L.X."/>
            <person name="Brandon R.C."/>
            <person name="Rogers Y.-H.C."/>
            <person name="Blazej R.G."/>
            <person name="Champe M."/>
            <person name="Pfeiffer B.D."/>
            <person name="Wan K.H."/>
            <person name="Doyle C."/>
            <person name="Baxter E.G."/>
            <person name="Helt G."/>
            <person name="Nelson C.R."/>
            <person name="Miklos G.L.G."/>
            <person name="Abril J.F."/>
            <person name="Agbayani A."/>
            <person name="An H.-J."/>
            <person name="Andrews-Pfannkoch C."/>
            <person name="Baldwin D."/>
            <person name="Ballew R.M."/>
            <person name="Basu A."/>
            <person name="Baxendale J."/>
            <person name="Bayraktaroglu L."/>
            <person name="Beasley E.M."/>
            <person name="Beeson K.Y."/>
            <person name="Benos P.V."/>
            <person name="Berman B.P."/>
            <person name="Bhandari D."/>
            <person name="Bolshakov S."/>
            <person name="Borkova D."/>
            <person name="Botchan M.R."/>
            <person name="Bouck J."/>
            <person name="Brokstein P."/>
            <person name="Brottier P."/>
            <person name="Burtis K.C."/>
            <person name="Busam D.A."/>
            <person name="Butler H."/>
            <person name="Cadieu E."/>
            <person name="Center A."/>
            <person name="Chandra I."/>
            <person name="Cherry J.M."/>
            <person name="Cawley S."/>
            <person name="Dahlke C."/>
            <person name="Davenport L.B."/>
            <person name="Davies P."/>
            <person name="de Pablos B."/>
            <person name="Delcher A."/>
            <person name="Deng Z."/>
            <person name="Mays A.D."/>
            <person name="Dew I."/>
            <person name="Dietz S.M."/>
            <person name="Dodson K."/>
            <person name="Doup L.E."/>
            <person name="Downes M."/>
            <person name="Dugan-Rocha S."/>
            <person name="Dunkov B.C."/>
            <person name="Dunn P."/>
            <person name="Durbin K.J."/>
            <person name="Evangelista C.C."/>
            <person name="Ferraz C."/>
            <person name="Ferriera S."/>
            <person name="Fleischmann W."/>
            <person name="Fosler C."/>
            <person name="Gabrielian A.E."/>
            <person name="Garg N.S."/>
            <person name="Gelbart W.M."/>
            <person name="Glasser K."/>
            <person name="Glodek A."/>
            <person name="Gong F."/>
            <person name="Gorrell J.H."/>
            <person name="Gu Z."/>
            <person name="Guan P."/>
            <person name="Harris M."/>
            <person name="Harris N.L."/>
            <person name="Harvey D.A."/>
            <person name="Heiman T.J."/>
            <person name="Hernandez J.R."/>
            <person name="Houck J."/>
            <person name="Hostin D."/>
            <person name="Houston K.A."/>
            <person name="Howland T.J."/>
            <person name="Wei M.-H."/>
            <person name="Ibegwam C."/>
            <person name="Jalali M."/>
            <person name="Kalush F."/>
            <person name="Karpen G.H."/>
            <person name="Ke Z."/>
            <person name="Kennison J.A."/>
            <person name="Ketchum K.A."/>
            <person name="Kimmel B.E."/>
            <person name="Kodira C.D."/>
            <person name="Kraft C.L."/>
            <person name="Kravitz S."/>
            <person name="Kulp D."/>
            <person name="Lai Z."/>
            <person name="Lasko P."/>
            <person name="Lei Y."/>
            <person name="Levitsky A.A."/>
            <person name="Li J.H."/>
            <person name="Li Z."/>
            <person name="Liang Y."/>
            <person name="Lin X."/>
            <person name="Liu X."/>
            <person name="Mattei B."/>
            <person name="McIntosh T.C."/>
            <person name="McLeod M.P."/>
            <person name="McPherson D."/>
            <person name="Merkulov G."/>
            <person name="Milshina N.V."/>
            <person name="Mobarry C."/>
            <person name="Morris J."/>
            <person name="Moshrefi A."/>
            <person name="Mount S.M."/>
            <person name="Moy M."/>
            <person name="Murphy B."/>
            <person name="Murphy L."/>
            <person name="Muzny D.M."/>
            <person name="Nelson D.L."/>
            <person name="Nelson D.R."/>
            <person name="Nelson K.A."/>
            <person name="Nixon K."/>
            <person name="Nusskern D.R."/>
            <person name="Pacleb J.M."/>
            <person name="Palazzolo M."/>
            <person name="Pittman G.S."/>
            <person name="Pan S."/>
            <person name="Pollard J."/>
            <person name="Puri V."/>
            <person name="Reese M.G."/>
            <person name="Reinert K."/>
            <person name="Remington K."/>
            <person name="Saunders R.D.C."/>
            <person name="Scheeler F."/>
            <person name="Shen H."/>
            <person name="Shue B.C."/>
            <person name="Siden-Kiamos I."/>
            <person name="Simpson M."/>
            <person name="Skupski M.P."/>
            <person name="Smith T.J."/>
            <person name="Spier E."/>
            <person name="Spradling A.C."/>
            <person name="Stapleton M."/>
            <person name="Strong R."/>
            <person name="Sun E."/>
            <person name="Svirskas R."/>
            <person name="Tector C."/>
            <person name="Turner R."/>
            <person name="Venter E."/>
            <person name="Wang A.H."/>
            <person name="Wang X."/>
            <person name="Wang Z.-Y."/>
            <person name="Wassarman D.A."/>
            <person name="Weinstock G.M."/>
            <person name="Weissenbach J."/>
            <person name="Williams S.M."/>
            <person name="Woodage T."/>
            <person name="Worley K.C."/>
            <person name="Wu D."/>
            <person name="Yang S."/>
            <person name="Yao Q.A."/>
            <person name="Ye J."/>
            <person name="Yeh R.-F."/>
            <person name="Zaveri J.S."/>
            <person name="Zhan M."/>
            <person name="Zhang G."/>
            <person name="Zhao Q."/>
            <person name="Zheng L."/>
            <person name="Zheng X.H."/>
            <person name="Zhong F.N."/>
            <person name="Zhong W."/>
            <person name="Zhou X."/>
            <person name="Zhu S.C."/>
            <person name="Zhu X."/>
            <person name="Smith H.O."/>
            <person name="Gibbs R.A."/>
            <person name="Myers E.W."/>
            <person name="Rubin G.M."/>
            <person name="Venter J.C."/>
        </authorList>
    </citation>
    <scope>NUCLEOTIDE SEQUENCE [LARGE SCALE GENOMIC DNA]</scope>
    <source>
        <strain evidence="10">Berkeley</strain>
    </source>
</reference>
<reference evidence="10" key="3">
    <citation type="journal article" date="2002" name="Genome Biol.">
        <title>Annotation of the Drosophila melanogaster euchromatic genome: a systematic review.</title>
        <authorList>
            <person name="Misra S."/>
            <person name="Crosby M.A."/>
            <person name="Mungall C.J."/>
            <person name="Matthews B.B."/>
            <person name="Campbell K.S."/>
            <person name="Hradecky P."/>
            <person name="Huang Y."/>
            <person name="Kaminker J.S."/>
            <person name="Millburn G.H."/>
            <person name="Prochnik S.E."/>
            <person name="Smith C.D."/>
            <person name="Tupy J.L."/>
            <person name="Whitfield E.J."/>
            <person name="Bayraktaroglu L."/>
            <person name="Berman B.P."/>
            <person name="Bettencourt B.R."/>
            <person name="Celniker S.E."/>
            <person name="de Grey A.D.N.J."/>
            <person name="Drysdale R.A."/>
            <person name="Harris N.L."/>
            <person name="Richter J."/>
            <person name="Russo S."/>
            <person name="Schroeder A.J."/>
            <person name="Shu S.Q."/>
            <person name="Stapleton M."/>
            <person name="Yamada C."/>
            <person name="Ashburner M."/>
            <person name="Gelbart W.M."/>
            <person name="Rubin G.M."/>
            <person name="Lewis S.E."/>
        </authorList>
    </citation>
    <scope>GENOME REANNOTATION</scope>
    <source>
        <strain evidence="10">Berkeley</strain>
    </source>
</reference>
<reference evidence="7" key="4">
    <citation type="submission" date="2003-08" db="EMBL/GenBank/DDBJ databases">
        <authorList>
            <person name="Stapleton M."/>
            <person name="Brokstein P."/>
            <person name="Hong L."/>
            <person name="Agbayani A."/>
            <person name="Carlson J."/>
            <person name="Champe M."/>
            <person name="Chavez C."/>
            <person name="Dorsett V."/>
            <person name="Dresnek D."/>
            <person name="Farfan D."/>
            <person name="Frise E."/>
            <person name="George R."/>
            <person name="Gonzalez M."/>
            <person name="Guarin H."/>
            <person name="Kronmiller B."/>
            <person name="Li P."/>
            <person name="Liao G."/>
            <person name="Miranda A."/>
            <person name="Mungall C.J."/>
            <person name="Nunoo J."/>
            <person name="Pacleb J."/>
            <person name="Paragas V."/>
            <person name="Park S."/>
            <person name="Patel S."/>
            <person name="Phouanenavong S."/>
            <person name="Wan K."/>
            <person name="Yu C."/>
            <person name="Lewis S.E."/>
            <person name="Rubin G.M."/>
            <person name="Celniker S."/>
        </authorList>
    </citation>
    <scope>NUCLEOTIDE SEQUENCE [LARGE SCALE MRNA]</scope>
    <source>
        <strain evidence="7">Berkeley</strain>
        <tissue evidence="7">Head</tissue>
    </source>
</reference>
<reference evidence="6" key="5">
    <citation type="journal article" date="2011" name="Mol. Cell. Biol.">
        <title>Spn1 regulates the GNBP3-dependent Toll signaling pathway in Drosophila melanogaster.</title>
        <authorList>
            <person name="Fullaondo A."/>
            <person name="Garcia-Sanchez S."/>
            <person name="Sanz-Parra A."/>
            <person name="Recio E."/>
            <person name="Lee S.Y."/>
            <person name="Gubb D."/>
        </authorList>
    </citation>
    <scope>FUNCTION</scope>
    <scope>INDUCTION BY MICROORGANISMS</scope>
    <scope>DISRUPTION PHENOTYPE</scope>
</reference>
<dbReference type="EMBL" id="AJ251744">
    <property type="protein sequence ID" value="CAB63096.1"/>
    <property type="molecule type" value="mRNA"/>
</dbReference>
<dbReference type="EMBL" id="AE013599">
    <property type="protein sequence ID" value="ACZ94347.1"/>
    <property type="molecule type" value="Genomic_DNA"/>
</dbReference>
<dbReference type="EMBL" id="BT010110">
    <property type="protein sequence ID" value="AAQ22579.1"/>
    <property type="molecule type" value="mRNA"/>
</dbReference>
<dbReference type="RefSeq" id="NP_001163067.1">
    <property type="nucleotide sequence ID" value="NM_001169596.3"/>
</dbReference>
<dbReference type="SMR" id="Q7YTY6"/>
<dbReference type="FunCoup" id="Q7YTY6">
    <property type="interactions" value="24"/>
</dbReference>
<dbReference type="IntAct" id="Q7YTY6">
    <property type="interactions" value="2"/>
</dbReference>
<dbReference type="STRING" id="7227.FBpp0289586"/>
<dbReference type="MEROPS" id="I04.038"/>
<dbReference type="GlyCosmos" id="Q7YTY6">
    <property type="glycosylation" value="2 sites, No reported glycans"/>
</dbReference>
<dbReference type="GlyGen" id="Q7YTY6">
    <property type="glycosylation" value="2 sites"/>
</dbReference>
<dbReference type="PaxDb" id="7227-FBpp0289586"/>
<dbReference type="DNASU" id="49808"/>
<dbReference type="EnsemblMetazoa" id="FBtr0300357">
    <property type="protein sequence ID" value="FBpp0289586"/>
    <property type="gene ID" value="FBgn0028988"/>
</dbReference>
<dbReference type="GeneID" id="49808"/>
<dbReference type="KEGG" id="dme:Dmel_CG9456"/>
<dbReference type="UCSC" id="CG9456-RA">
    <property type="organism name" value="d. melanogaster"/>
</dbReference>
<dbReference type="AGR" id="FB:FBgn0028988"/>
<dbReference type="CTD" id="49808"/>
<dbReference type="FlyBase" id="FBgn0028988">
    <property type="gene designation" value="Spn42Dd"/>
</dbReference>
<dbReference type="VEuPathDB" id="VectorBase:FBgn0028988"/>
<dbReference type="eggNOG" id="KOG2392">
    <property type="taxonomic scope" value="Eukaryota"/>
</dbReference>
<dbReference type="GeneTree" id="ENSGT00940000166714"/>
<dbReference type="HOGENOM" id="CLU_023330_0_2_1"/>
<dbReference type="InParanoid" id="Q7YTY6"/>
<dbReference type="OMA" id="QMGTFRA"/>
<dbReference type="OrthoDB" id="671595at2759"/>
<dbReference type="PhylomeDB" id="Q7YTY6"/>
<dbReference type="Reactome" id="R-DME-114608">
    <property type="pathway name" value="Platelet degranulation"/>
</dbReference>
<dbReference type="Reactome" id="R-DME-140837">
    <property type="pathway name" value="Intrinsic Pathway of Fibrin Clot Formation"/>
</dbReference>
<dbReference type="Reactome" id="R-DME-140875">
    <property type="pathway name" value="Common Pathway of Fibrin Clot Formation"/>
</dbReference>
<dbReference type="Reactome" id="R-DME-194002">
    <property type="pathway name" value="Glucocorticoid biosynthesis"/>
</dbReference>
<dbReference type="Reactome" id="R-DME-2022377">
    <property type="pathway name" value="Metabolism of Angiotensinogen to Angiotensins"/>
</dbReference>
<dbReference type="Reactome" id="R-DME-204005">
    <property type="pathway name" value="COPII-mediated vesicle transport"/>
</dbReference>
<dbReference type="Reactome" id="R-DME-375276">
    <property type="pathway name" value="Peptide ligand-binding receptors"/>
</dbReference>
<dbReference type="Reactome" id="R-DME-381426">
    <property type="pathway name" value="Regulation of Insulin-like Growth Factor (IGF) transport and uptake by Insulin-like Growth Factor Binding Proteins (IGFBPs)"/>
</dbReference>
<dbReference type="Reactome" id="R-DME-416476">
    <property type="pathway name" value="G alpha (q) signalling events"/>
</dbReference>
<dbReference type="Reactome" id="R-DME-418594">
    <property type="pathway name" value="G alpha (i) signalling events"/>
</dbReference>
<dbReference type="Reactome" id="R-DME-5694530">
    <property type="pathway name" value="Cargo concentration in the ER"/>
</dbReference>
<dbReference type="Reactome" id="R-DME-6798695">
    <property type="pathway name" value="Neutrophil degranulation"/>
</dbReference>
<dbReference type="Reactome" id="R-DME-8939242">
    <property type="pathway name" value="RUNX1 regulates transcription of genes involved in differentiation of keratinocytes"/>
</dbReference>
<dbReference type="Reactome" id="R-DME-8957275">
    <property type="pathway name" value="Post-translational protein phosphorylation"/>
</dbReference>
<dbReference type="Reactome" id="R-DME-9757110">
    <property type="pathway name" value="Prednisone ADME"/>
</dbReference>
<dbReference type="BioGRID-ORCS" id="49808">
    <property type="hits" value="0 hits in 3 CRISPR screens"/>
</dbReference>
<dbReference type="GenomeRNAi" id="49808"/>
<dbReference type="PRO" id="PR:Q7YTY6"/>
<dbReference type="Proteomes" id="UP000000803">
    <property type="component" value="Chromosome 2R"/>
</dbReference>
<dbReference type="Bgee" id="FBgn0028988">
    <property type="expression patterns" value="Expressed in spermatid in male reproductive gland and 57 other cell types or tissues"/>
</dbReference>
<dbReference type="GO" id="GO:0005615">
    <property type="term" value="C:extracellular space"/>
    <property type="evidence" value="ECO:0007005"/>
    <property type="project" value="FlyBase"/>
</dbReference>
<dbReference type="GO" id="GO:0004867">
    <property type="term" value="F:serine-type endopeptidase inhibitor activity"/>
    <property type="evidence" value="ECO:0000314"/>
    <property type="project" value="FlyBase"/>
</dbReference>
<dbReference type="GO" id="GO:0002376">
    <property type="term" value="P:immune system process"/>
    <property type="evidence" value="ECO:0007669"/>
    <property type="project" value="UniProtKB-KW"/>
</dbReference>
<dbReference type="GO" id="GO:1905035">
    <property type="term" value="P:negative regulation of antifungal innate immune response"/>
    <property type="evidence" value="ECO:0000315"/>
    <property type="project" value="FlyBase"/>
</dbReference>
<dbReference type="GO" id="GO:0002785">
    <property type="term" value="P:negative regulation of antimicrobial peptide production"/>
    <property type="evidence" value="ECO:0000315"/>
    <property type="project" value="FlyBase"/>
</dbReference>
<dbReference type="GO" id="GO:0045861">
    <property type="term" value="P:negative regulation of proteolysis"/>
    <property type="evidence" value="ECO:0000255"/>
    <property type="project" value="FlyBase"/>
</dbReference>
<dbReference type="GO" id="GO:0160035">
    <property type="term" value="P:negative regulation of Toll receptor ligand protein activation cascade"/>
    <property type="evidence" value="ECO:0000314"/>
    <property type="project" value="FlyBase"/>
</dbReference>
<dbReference type="GO" id="GO:0019953">
    <property type="term" value="P:sexual reproduction"/>
    <property type="evidence" value="ECO:0007007"/>
    <property type="project" value="FlyBase"/>
</dbReference>
<dbReference type="CDD" id="cd19954">
    <property type="entry name" value="serpin42Dd-like_insects"/>
    <property type="match status" value="1"/>
</dbReference>
<dbReference type="FunFam" id="3.30.497.10:FF:000006">
    <property type="entry name" value="Plasminogen activator inhibitor 1"/>
    <property type="match status" value="1"/>
</dbReference>
<dbReference type="Gene3D" id="2.30.39.10">
    <property type="entry name" value="Alpha-1-antitrypsin, domain 1"/>
    <property type="match status" value="1"/>
</dbReference>
<dbReference type="Gene3D" id="3.30.497.10">
    <property type="entry name" value="Antithrombin, subunit I, domain 2"/>
    <property type="match status" value="1"/>
</dbReference>
<dbReference type="InterPro" id="IPR023796">
    <property type="entry name" value="Serpin_dom"/>
</dbReference>
<dbReference type="InterPro" id="IPR000215">
    <property type="entry name" value="Serpin_fam"/>
</dbReference>
<dbReference type="InterPro" id="IPR036186">
    <property type="entry name" value="Serpin_sf"/>
</dbReference>
<dbReference type="InterPro" id="IPR042178">
    <property type="entry name" value="Serpin_sf_1"/>
</dbReference>
<dbReference type="InterPro" id="IPR042185">
    <property type="entry name" value="Serpin_sf_2"/>
</dbReference>
<dbReference type="PANTHER" id="PTHR11461:SF372">
    <property type="entry name" value="ACCESSORY GLAND PROTEIN ACP76A-RELATED"/>
    <property type="match status" value="1"/>
</dbReference>
<dbReference type="PANTHER" id="PTHR11461">
    <property type="entry name" value="SERINE PROTEASE INHIBITOR, SERPIN"/>
    <property type="match status" value="1"/>
</dbReference>
<dbReference type="Pfam" id="PF00079">
    <property type="entry name" value="Serpin"/>
    <property type="match status" value="1"/>
</dbReference>
<dbReference type="SMART" id="SM00093">
    <property type="entry name" value="SERPIN"/>
    <property type="match status" value="1"/>
</dbReference>
<dbReference type="SUPFAM" id="SSF56574">
    <property type="entry name" value="Serpins"/>
    <property type="match status" value="1"/>
</dbReference>
<proteinExistence type="evidence at transcript level"/>
<gene>
    <name evidence="9" type="primary">Spn42Dd</name>
    <name evidence="5" type="synonym">Spn1</name>
    <name evidence="9" type="ORF">CG9456</name>
</gene>